<sequence>MAVPKSKKSKSRTRMRRSHDRLAMNTYIEDATSGELRRPHHIDLKTGMYRGKQILEPTDDI</sequence>
<protein>
    <recommendedName>
        <fullName evidence="1">Large ribosomal subunit protein bL32</fullName>
    </recommendedName>
    <alternativeName>
        <fullName evidence="2">50S ribosomal protein L32</fullName>
    </alternativeName>
</protein>
<dbReference type="EMBL" id="CP000158">
    <property type="protein sequence ID" value="ABI76460.1"/>
    <property type="molecule type" value="Genomic_DNA"/>
</dbReference>
<dbReference type="RefSeq" id="WP_011646981.1">
    <property type="nucleotide sequence ID" value="NC_008358.1"/>
</dbReference>
<dbReference type="SMR" id="Q0C0R2"/>
<dbReference type="STRING" id="228405.HNE_1981"/>
<dbReference type="KEGG" id="hne:HNE_1981"/>
<dbReference type="eggNOG" id="COG0333">
    <property type="taxonomic scope" value="Bacteria"/>
</dbReference>
<dbReference type="HOGENOM" id="CLU_129084_2_2_5"/>
<dbReference type="Proteomes" id="UP000001959">
    <property type="component" value="Chromosome"/>
</dbReference>
<dbReference type="GO" id="GO:0015934">
    <property type="term" value="C:large ribosomal subunit"/>
    <property type="evidence" value="ECO:0007669"/>
    <property type="project" value="InterPro"/>
</dbReference>
<dbReference type="GO" id="GO:0003735">
    <property type="term" value="F:structural constituent of ribosome"/>
    <property type="evidence" value="ECO:0007669"/>
    <property type="project" value="InterPro"/>
</dbReference>
<dbReference type="GO" id="GO:0006412">
    <property type="term" value="P:translation"/>
    <property type="evidence" value="ECO:0007669"/>
    <property type="project" value="UniProtKB-UniRule"/>
</dbReference>
<dbReference type="HAMAP" id="MF_00340">
    <property type="entry name" value="Ribosomal_bL32"/>
    <property type="match status" value="1"/>
</dbReference>
<dbReference type="InterPro" id="IPR002677">
    <property type="entry name" value="Ribosomal_bL32"/>
</dbReference>
<dbReference type="InterPro" id="IPR044957">
    <property type="entry name" value="Ribosomal_bL32_bact"/>
</dbReference>
<dbReference type="InterPro" id="IPR011332">
    <property type="entry name" value="Ribosomal_zn-bd"/>
</dbReference>
<dbReference type="NCBIfam" id="TIGR01031">
    <property type="entry name" value="rpmF_bact"/>
    <property type="match status" value="1"/>
</dbReference>
<dbReference type="PANTHER" id="PTHR35534">
    <property type="entry name" value="50S RIBOSOMAL PROTEIN L32"/>
    <property type="match status" value="1"/>
</dbReference>
<dbReference type="PANTHER" id="PTHR35534:SF1">
    <property type="entry name" value="LARGE RIBOSOMAL SUBUNIT PROTEIN BL32"/>
    <property type="match status" value="1"/>
</dbReference>
<dbReference type="Pfam" id="PF01783">
    <property type="entry name" value="Ribosomal_L32p"/>
    <property type="match status" value="1"/>
</dbReference>
<dbReference type="SUPFAM" id="SSF57829">
    <property type="entry name" value="Zn-binding ribosomal proteins"/>
    <property type="match status" value="1"/>
</dbReference>
<gene>
    <name evidence="1" type="primary">rpmF</name>
    <name type="ordered locus">HNE_1981</name>
</gene>
<comment type="similarity">
    <text evidence="1">Belongs to the bacterial ribosomal protein bL32 family.</text>
</comment>
<evidence type="ECO:0000255" key="1">
    <source>
        <dbReference type="HAMAP-Rule" id="MF_00340"/>
    </source>
</evidence>
<evidence type="ECO:0000305" key="2"/>
<reference key="1">
    <citation type="journal article" date="2006" name="J. Bacteriol.">
        <title>Comparative genomic evidence for a close relationship between the dimorphic prosthecate bacteria Hyphomonas neptunium and Caulobacter crescentus.</title>
        <authorList>
            <person name="Badger J.H."/>
            <person name="Hoover T.R."/>
            <person name="Brun Y.V."/>
            <person name="Weiner R.M."/>
            <person name="Laub M.T."/>
            <person name="Alexandre G."/>
            <person name="Mrazek J."/>
            <person name="Ren Q."/>
            <person name="Paulsen I.T."/>
            <person name="Nelson K.E."/>
            <person name="Khouri H.M."/>
            <person name="Radune D."/>
            <person name="Sosa J."/>
            <person name="Dodson R.J."/>
            <person name="Sullivan S.A."/>
            <person name="Rosovitz M.J."/>
            <person name="Madupu R."/>
            <person name="Brinkac L.M."/>
            <person name="Durkin A.S."/>
            <person name="Daugherty S.C."/>
            <person name="Kothari S.P."/>
            <person name="Giglio M.G."/>
            <person name="Zhou L."/>
            <person name="Haft D.H."/>
            <person name="Selengut J.D."/>
            <person name="Davidsen T.M."/>
            <person name="Yang Q."/>
            <person name="Zafar N."/>
            <person name="Ward N.L."/>
        </authorList>
    </citation>
    <scope>NUCLEOTIDE SEQUENCE [LARGE SCALE GENOMIC DNA]</scope>
    <source>
        <strain>ATCC 15444</strain>
    </source>
</reference>
<accession>Q0C0R2</accession>
<name>RL32_HYPNA</name>
<organism>
    <name type="scientific">Hyphomonas neptunium (strain ATCC 15444)</name>
    <dbReference type="NCBI Taxonomy" id="228405"/>
    <lineage>
        <taxon>Bacteria</taxon>
        <taxon>Pseudomonadati</taxon>
        <taxon>Pseudomonadota</taxon>
        <taxon>Alphaproteobacteria</taxon>
        <taxon>Hyphomonadales</taxon>
        <taxon>Hyphomonadaceae</taxon>
        <taxon>Hyphomonas</taxon>
    </lineage>
</organism>
<feature type="chain" id="PRO_0000296480" description="Large ribosomal subunit protein bL32">
    <location>
        <begin position="1"/>
        <end position="61"/>
    </location>
</feature>
<keyword id="KW-1185">Reference proteome</keyword>
<keyword id="KW-0687">Ribonucleoprotein</keyword>
<keyword id="KW-0689">Ribosomal protein</keyword>
<proteinExistence type="inferred from homology"/>